<protein>
    <recommendedName>
        <fullName evidence="1">Arginine--tRNA ligase</fullName>
        <ecNumber evidence="1">6.1.1.19</ecNumber>
    </recommendedName>
    <alternativeName>
        <fullName evidence="1">Arginyl-tRNA synthetase</fullName>
        <shortName evidence="1">ArgRS</shortName>
    </alternativeName>
</protein>
<feature type="chain" id="PRO_0000242057" description="Arginine--tRNA ligase">
    <location>
        <begin position="1"/>
        <end position="581"/>
    </location>
</feature>
<feature type="short sequence motif" description="'HIGH' region">
    <location>
        <begin position="131"/>
        <end position="141"/>
    </location>
</feature>
<organism>
    <name type="scientific">Nitrosospira multiformis (strain ATCC 25196 / NCIMB 11849 / C 71)</name>
    <dbReference type="NCBI Taxonomy" id="323848"/>
    <lineage>
        <taxon>Bacteria</taxon>
        <taxon>Pseudomonadati</taxon>
        <taxon>Pseudomonadota</taxon>
        <taxon>Betaproteobacteria</taxon>
        <taxon>Nitrosomonadales</taxon>
        <taxon>Nitrosomonadaceae</taxon>
        <taxon>Nitrosospira</taxon>
    </lineage>
</organism>
<gene>
    <name evidence="1" type="primary">argS</name>
    <name type="ordered locus">Nmul_A2456</name>
</gene>
<name>SYR_NITMU</name>
<proteinExistence type="inferred from homology"/>
<keyword id="KW-0030">Aminoacyl-tRNA synthetase</keyword>
<keyword id="KW-0067">ATP-binding</keyword>
<keyword id="KW-0963">Cytoplasm</keyword>
<keyword id="KW-0436">Ligase</keyword>
<keyword id="KW-0547">Nucleotide-binding</keyword>
<keyword id="KW-0648">Protein biosynthesis</keyword>
<keyword id="KW-1185">Reference proteome</keyword>
<comment type="catalytic activity">
    <reaction evidence="1">
        <text>tRNA(Arg) + L-arginine + ATP = L-arginyl-tRNA(Arg) + AMP + diphosphate</text>
        <dbReference type="Rhea" id="RHEA:20301"/>
        <dbReference type="Rhea" id="RHEA-COMP:9658"/>
        <dbReference type="Rhea" id="RHEA-COMP:9673"/>
        <dbReference type="ChEBI" id="CHEBI:30616"/>
        <dbReference type="ChEBI" id="CHEBI:32682"/>
        <dbReference type="ChEBI" id="CHEBI:33019"/>
        <dbReference type="ChEBI" id="CHEBI:78442"/>
        <dbReference type="ChEBI" id="CHEBI:78513"/>
        <dbReference type="ChEBI" id="CHEBI:456215"/>
        <dbReference type="EC" id="6.1.1.19"/>
    </reaction>
</comment>
<comment type="subunit">
    <text evidence="1">Monomer.</text>
</comment>
<comment type="subcellular location">
    <subcellularLocation>
        <location evidence="1">Cytoplasm</location>
    </subcellularLocation>
</comment>
<comment type="similarity">
    <text evidence="1">Belongs to the class-I aminoacyl-tRNA synthetase family.</text>
</comment>
<comment type="sequence caution" evidence="2">
    <conflict type="erroneous initiation">
        <sequence resource="EMBL-CDS" id="ABB75745"/>
    </conflict>
</comment>
<sequence length="581" mass="64698">MIPPVQPDFKSHFTDILRNALNERGLADLNLDIEFARPRQSSHGDYSCNLAMQLAKPLRQKPRDIAQSLATAFSASPYLEKVEIAGAGFINLFLTTSAKQQFSRYVLESGEKFGHSSMGAGEKIQVEFVSANPTGPLHVGHGRGAAFGASLANVLAAAGYSVTREYYINDAGRQMDILALSTWLRYLELNGVASAFPPNAYQGEYVRDMARLIHKAHAGRYVHEPELLFDRVAGAEADTEAALDGLIANAKKLLGQDYAYIHNFVLNEQLGDCRNDLMEFGVTFDIWFSEQSLFDSGGVAQAVHLLEEGNYLYQQDGAKWFRSSHFGDEKDRVVQRENGQFTYFASDIAYHLNKFSRGFDRVIDIWGADHHGYISRVKGAMQALALDPEKLEIALVQFAVLYRDGKKVPMSTRAGEFVTLRELRQEVGTDAARFFYVLRKSDQHLDFDLDLAKSQSTDNPVYYVQYAHARVCSVLEQWGEDPGMLVTADTSALTGAAELSLLQKLIDYPETVEAAAREFSPHLIAFYLKELAGEFHSYYNSTRFLVPEMTVRLARLALVAAVRQVLNNGLKLLGVSAPAKM</sequence>
<evidence type="ECO:0000255" key="1">
    <source>
        <dbReference type="HAMAP-Rule" id="MF_00123"/>
    </source>
</evidence>
<evidence type="ECO:0000305" key="2"/>
<reference key="1">
    <citation type="submission" date="2005-08" db="EMBL/GenBank/DDBJ databases">
        <title>Complete sequence of chromosome 1 of Nitrosospira multiformis ATCC 25196.</title>
        <authorList>
            <person name="Copeland A."/>
            <person name="Lucas S."/>
            <person name="Lapidus A."/>
            <person name="Barry K."/>
            <person name="Detter J.C."/>
            <person name="Glavina T."/>
            <person name="Hammon N."/>
            <person name="Israni S."/>
            <person name="Pitluck S."/>
            <person name="Chain P."/>
            <person name="Malfatti S."/>
            <person name="Shin M."/>
            <person name="Vergez L."/>
            <person name="Schmutz J."/>
            <person name="Larimer F."/>
            <person name="Land M."/>
            <person name="Hauser L."/>
            <person name="Kyrpides N."/>
            <person name="Lykidis A."/>
            <person name="Richardson P."/>
        </authorList>
    </citation>
    <scope>NUCLEOTIDE SEQUENCE [LARGE SCALE GENOMIC DNA]</scope>
    <source>
        <strain>ATCC 25196 / NCIMB 11849 / C 71</strain>
    </source>
</reference>
<dbReference type="EC" id="6.1.1.19" evidence="1"/>
<dbReference type="EMBL" id="CP000103">
    <property type="protein sequence ID" value="ABB75745.1"/>
    <property type="status" value="ALT_INIT"/>
    <property type="molecule type" value="Genomic_DNA"/>
</dbReference>
<dbReference type="RefSeq" id="WP_049783179.1">
    <property type="nucleotide sequence ID" value="NZ_FNVK01000014.1"/>
</dbReference>
<dbReference type="SMR" id="Q2Y676"/>
<dbReference type="STRING" id="323848.Nmul_A2456"/>
<dbReference type="KEGG" id="nmu:Nmul_A2456"/>
<dbReference type="eggNOG" id="COG0018">
    <property type="taxonomic scope" value="Bacteria"/>
</dbReference>
<dbReference type="HOGENOM" id="CLU_006406_0_1_4"/>
<dbReference type="OrthoDB" id="9803211at2"/>
<dbReference type="Proteomes" id="UP000002718">
    <property type="component" value="Chromosome"/>
</dbReference>
<dbReference type="GO" id="GO:0005737">
    <property type="term" value="C:cytoplasm"/>
    <property type="evidence" value="ECO:0007669"/>
    <property type="project" value="UniProtKB-SubCell"/>
</dbReference>
<dbReference type="GO" id="GO:0004814">
    <property type="term" value="F:arginine-tRNA ligase activity"/>
    <property type="evidence" value="ECO:0007669"/>
    <property type="project" value="UniProtKB-UniRule"/>
</dbReference>
<dbReference type="GO" id="GO:0005524">
    <property type="term" value="F:ATP binding"/>
    <property type="evidence" value="ECO:0007669"/>
    <property type="project" value="UniProtKB-UniRule"/>
</dbReference>
<dbReference type="GO" id="GO:0006420">
    <property type="term" value="P:arginyl-tRNA aminoacylation"/>
    <property type="evidence" value="ECO:0007669"/>
    <property type="project" value="UniProtKB-UniRule"/>
</dbReference>
<dbReference type="CDD" id="cd07956">
    <property type="entry name" value="Anticodon_Ia_Arg"/>
    <property type="match status" value="1"/>
</dbReference>
<dbReference type="CDD" id="cd00671">
    <property type="entry name" value="ArgRS_core"/>
    <property type="match status" value="1"/>
</dbReference>
<dbReference type="FunFam" id="1.10.730.10:FF:000008">
    <property type="entry name" value="Arginine--tRNA ligase"/>
    <property type="match status" value="1"/>
</dbReference>
<dbReference type="FunFam" id="3.40.50.620:FF:000062">
    <property type="entry name" value="Arginine--tRNA ligase"/>
    <property type="match status" value="1"/>
</dbReference>
<dbReference type="Gene3D" id="3.30.1360.70">
    <property type="entry name" value="Arginyl tRNA synthetase N-terminal domain"/>
    <property type="match status" value="1"/>
</dbReference>
<dbReference type="Gene3D" id="3.40.50.620">
    <property type="entry name" value="HUPs"/>
    <property type="match status" value="1"/>
</dbReference>
<dbReference type="Gene3D" id="1.10.730.10">
    <property type="entry name" value="Isoleucyl-tRNA Synthetase, Domain 1"/>
    <property type="match status" value="1"/>
</dbReference>
<dbReference type="HAMAP" id="MF_00123">
    <property type="entry name" value="Arg_tRNA_synth"/>
    <property type="match status" value="1"/>
</dbReference>
<dbReference type="InterPro" id="IPR001412">
    <property type="entry name" value="aa-tRNA-synth_I_CS"/>
</dbReference>
<dbReference type="InterPro" id="IPR001278">
    <property type="entry name" value="Arg-tRNA-ligase"/>
</dbReference>
<dbReference type="InterPro" id="IPR005148">
    <property type="entry name" value="Arg-tRNA-synth_N"/>
</dbReference>
<dbReference type="InterPro" id="IPR036695">
    <property type="entry name" value="Arg-tRNA-synth_N_sf"/>
</dbReference>
<dbReference type="InterPro" id="IPR035684">
    <property type="entry name" value="ArgRS_core"/>
</dbReference>
<dbReference type="InterPro" id="IPR008909">
    <property type="entry name" value="DALR_anticod-bd"/>
</dbReference>
<dbReference type="InterPro" id="IPR014729">
    <property type="entry name" value="Rossmann-like_a/b/a_fold"/>
</dbReference>
<dbReference type="InterPro" id="IPR009080">
    <property type="entry name" value="tRNAsynth_Ia_anticodon-bd"/>
</dbReference>
<dbReference type="NCBIfam" id="TIGR00456">
    <property type="entry name" value="argS"/>
    <property type="match status" value="1"/>
</dbReference>
<dbReference type="PANTHER" id="PTHR11956:SF5">
    <property type="entry name" value="ARGININE--TRNA LIGASE, CYTOPLASMIC"/>
    <property type="match status" value="1"/>
</dbReference>
<dbReference type="PANTHER" id="PTHR11956">
    <property type="entry name" value="ARGINYL-TRNA SYNTHETASE"/>
    <property type="match status" value="1"/>
</dbReference>
<dbReference type="Pfam" id="PF03485">
    <property type="entry name" value="Arg_tRNA_synt_N"/>
    <property type="match status" value="1"/>
</dbReference>
<dbReference type="Pfam" id="PF05746">
    <property type="entry name" value="DALR_1"/>
    <property type="match status" value="1"/>
</dbReference>
<dbReference type="Pfam" id="PF00750">
    <property type="entry name" value="tRNA-synt_1d"/>
    <property type="match status" value="2"/>
</dbReference>
<dbReference type="PRINTS" id="PR01038">
    <property type="entry name" value="TRNASYNTHARG"/>
</dbReference>
<dbReference type="SMART" id="SM01016">
    <property type="entry name" value="Arg_tRNA_synt_N"/>
    <property type="match status" value="1"/>
</dbReference>
<dbReference type="SMART" id="SM00836">
    <property type="entry name" value="DALR_1"/>
    <property type="match status" value="1"/>
</dbReference>
<dbReference type="SUPFAM" id="SSF47323">
    <property type="entry name" value="Anticodon-binding domain of a subclass of class I aminoacyl-tRNA synthetases"/>
    <property type="match status" value="1"/>
</dbReference>
<dbReference type="SUPFAM" id="SSF55190">
    <property type="entry name" value="Arginyl-tRNA synthetase (ArgRS), N-terminal 'additional' domain"/>
    <property type="match status" value="1"/>
</dbReference>
<dbReference type="SUPFAM" id="SSF52374">
    <property type="entry name" value="Nucleotidylyl transferase"/>
    <property type="match status" value="1"/>
</dbReference>
<dbReference type="PROSITE" id="PS00178">
    <property type="entry name" value="AA_TRNA_LIGASE_I"/>
    <property type="match status" value="1"/>
</dbReference>
<accession>Q2Y676</accession>